<accession>Q5UQS8</accession>
<reference key="1">
    <citation type="journal article" date="2004" name="Science">
        <title>The 1.2-megabase genome sequence of Mimivirus.</title>
        <authorList>
            <person name="Raoult D."/>
            <person name="Audic S."/>
            <person name="Robert C."/>
            <person name="Abergel C."/>
            <person name="Renesto P."/>
            <person name="Ogata H."/>
            <person name="La Scola B."/>
            <person name="Susan M."/>
            <person name="Claverie J.-M."/>
        </authorList>
    </citation>
    <scope>NUCLEOTIDE SEQUENCE [LARGE SCALE GENOMIC DNA]</scope>
    <source>
        <strain>Rowbotham-Bradford</strain>
    </source>
</reference>
<sequence length="173" mass="20747">MTTVIEFYISDKEREIVIEQLLEFFPKKKNCKDIEKGIYDFTKQYCKSDNSYLRLAQAIYIDCAKNIMFNLKDENNHTIKKIKKLIDKNKYNAYNLAFLNPEELNKDNWIKIIARKQMTEETLNQMATVEWKPCYACKNTSYHFYQLQTRSADEPMTTFYICKNCMKTYKVNN</sequence>
<protein>
    <recommendedName>
        <fullName>Transcription factor S-II-related protein</fullName>
    </recommendedName>
</protein>
<feature type="chain" id="PRO_0000309207" description="Transcription factor S-II-related protein">
    <location>
        <begin position="1"/>
        <end position="173"/>
    </location>
</feature>
<feature type="domain" description="TFIIS central" evidence="2">
    <location>
        <begin position="9"/>
        <end position="129"/>
    </location>
</feature>
<feature type="zinc finger region" description="TFIIS-type" evidence="1">
    <location>
        <begin position="130"/>
        <end position="170"/>
    </location>
</feature>
<feature type="binding site" evidence="1">
    <location>
        <position position="134"/>
    </location>
    <ligand>
        <name>Zn(2+)</name>
        <dbReference type="ChEBI" id="CHEBI:29105"/>
    </ligand>
</feature>
<feature type="binding site" evidence="1">
    <location>
        <position position="137"/>
    </location>
    <ligand>
        <name>Zn(2+)</name>
        <dbReference type="ChEBI" id="CHEBI:29105"/>
    </ligand>
</feature>
<feature type="binding site" evidence="1">
    <location>
        <position position="162"/>
    </location>
    <ligand>
        <name>Zn(2+)</name>
        <dbReference type="ChEBI" id="CHEBI:29105"/>
    </ligand>
</feature>
<feature type="binding site" evidence="1">
    <location>
        <position position="165"/>
    </location>
    <ligand>
        <name>Zn(2+)</name>
        <dbReference type="ChEBI" id="CHEBI:29105"/>
    </ligand>
</feature>
<organism>
    <name type="scientific">Acanthamoeba polyphaga mimivirus</name>
    <name type="common">APMV</name>
    <dbReference type="NCBI Taxonomy" id="212035"/>
    <lineage>
        <taxon>Viruses</taxon>
        <taxon>Varidnaviria</taxon>
        <taxon>Bamfordvirae</taxon>
        <taxon>Nucleocytoviricota</taxon>
        <taxon>Megaviricetes</taxon>
        <taxon>Imitervirales</taxon>
        <taxon>Mimiviridae</taxon>
        <taxon>Megamimivirinae</taxon>
        <taxon>Mimivirus</taxon>
        <taxon>Mimivirus bradfordmassiliense</taxon>
    </lineage>
</organism>
<gene>
    <name type="ordered locus">MIMI_R339</name>
</gene>
<dbReference type="EMBL" id="AY653733">
    <property type="protein sequence ID" value="AAV50608.1"/>
    <property type="molecule type" value="Genomic_DNA"/>
</dbReference>
<dbReference type="SMR" id="Q5UQS8"/>
<dbReference type="KEGG" id="vg:9924956"/>
<dbReference type="OrthoDB" id="16050at10239"/>
<dbReference type="Proteomes" id="UP000001134">
    <property type="component" value="Genome"/>
</dbReference>
<dbReference type="GO" id="GO:0003899">
    <property type="term" value="F:DNA-directed RNA polymerase activity"/>
    <property type="evidence" value="ECO:0007669"/>
    <property type="project" value="InterPro"/>
</dbReference>
<dbReference type="GO" id="GO:0003676">
    <property type="term" value="F:nucleic acid binding"/>
    <property type="evidence" value="ECO:0007669"/>
    <property type="project" value="InterPro"/>
</dbReference>
<dbReference type="GO" id="GO:0008270">
    <property type="term" value="F:zinc ion binding"/>
    <property type="evidence" value="ECO:0007669"/>
    <property type="project" value="UniProtKB-KW"/>
</dbReference>
<dbReference type="GO" id="GO:0006386">
    <property type="term" value="P:termination of RNA polymerase III transcription"/>
    <property type="evidence" value="ECO:0007669"/>
    <property type="project" value="TreeGrafter"/>
</dbReference>
<dbReference type="CDD" id="cd00656">
    <property type="entry name" value="Zn-ribbon"/>
    <property type="match status" value="1"/>
</dbReference>
<dbReference type="Gene3D" id="2.20.25.10">
    <property type="match status" value="1"/>
</dbReference>
<dbReference type="InterPro" id="IPR012164">
    <property type="entry name" value="Rpa12/Rpb9/Rpc10/TFS"/>
</dbReference>
<dbReference type="InterPro" id="IPR003618">
    <property type="entry name" value="TFIIS_cen_dom"/>
</dbReference>
<dbReference type="InterPro" id="IPR001222">
    <property type="entry name" value="Znf_TFIIS"/>
</dbReference>
<dbReference type="PANTHER" id="PTHR11239">
    <property type="entry name" value="DNA-DIRECTED RNA POLYMERASE"/>
    <property type="match status" value="1"/>
</dbReference>
<dbReference type="PANTHER" id="PTHR11239:SF12">
    <property type="entry name" value="DNA-DIRECTED RNA POLYMERASE III SUBUNIT RPC10"/>
    <property type="match status" value="1"/>
</dbReference>
<dbReference type="Pfam" id="PF01096">
    <property type="entry name" value="Zn_ribbon_TFIIS"/>
    <property type="match status" value="1"/>
</dbReference>
<dbReference type="SMART" id="SM00440">
    <property type="entry name" value="ZnF_C2C2"/>
    <property type="match status" value="1"/>
</dbReference>
<dbReference type="SUPFAM" id="SSF57783">
    <property type="entry name" value="Zinc beta-ribbon"/>
    <property type="match status" value="1"/>
</dbReference>
<dbReference type="PROSITE" id="PS51321">
    <property type="entry name" value="TFIIS_CENTRAL"/>
    <property type="match status" value="1"/>
</dbReference>
<dbReference type="PROSITE" id="PS51133">
    <property type="entry name" value="ZF_TFIIS_2"/>
    <property type="match status" value="1"/>
</dbReference>
<name>TFS2_MIMIV</name>
<proteinExistence type="inferred from homology"/>
<keyword id="KW-0479">Metal-binding</keyword>
<keyword id="KW-1185">Reference proteome</keyword>
<keyword id="KW-0804">Transcription</keyword>
<keyword id="KW-0862">Zinc</keyword>
<keyword id="KW-0863">Zinc-finger</keyword>
<organismHost>
    <name type="scientific">Acanthamoeba polyphaga</name>
    <name type="common">Amoeba</name>
    <dbReference type="NCBI Taxonomy" id="5757"/>
</organismHost>
<comment type="similarity">
    <text evidence="3">Belongs to the TFS-II family.</text>
</comment>
<evidence type="ECO:0000255" key="1">
    <source>
        <dbReference type="PROSITE-ProRule" id="PRU00472"/>
    </source>
</evidence>
<evidence type="ECO:0000255" key="2">
    <source>
        <dbReference type="PROSITE-ProRule" id="PRU00651"/>
    </source>
</evidence>
<evidence type="ECO:0000305" key="3"/>